<organism>
    <name type="scientific">Equine herpesvirus 1 (strain Kentucky D)</name>
    <name type="common">EHV-1</name>
    <name type="synonym">Equine abortion virus</name>
    <dbReference type="NCBI Taxonomy" id="10330"/>
    <lineage>
        <taxon>Viruses</taxon>
        <taxon>Duplodnaviria</taxon>
        <taxon>Heunggongvirae</taxon>
        <taxon>Peploviricota</taxon>
        <taxon>Herviviricetes</taxon>
        <taxon>Herpesvirales</taxon>
        <taxon>Orthoherpesviridae</taxon>
        <taxon>Alphaherpesvirinae</taxon>
        <taxon>Varicellovirus</taxon>
        <taxon>Varicellovirus equidalpha1</taxon>
        <taxon>Equid alphaherpesvirus 1</taxon>
    </lineage>
</organism>
<reference key="1">
    <citation type="journal article" date="1990" name="J. Gen. Virol.">
        <title>Equine herpesvirus type 1 unique short fragment encodes glycoproteins with homology to herpes simplex virus type 1 gD, gI and gE.</title>
        <authorList>
            <person name="Audonnet J.-C."/>
            <person name="Winslow J."/>
            <person name="Allen G."/>
            <person name="Paoletti E."/>
        </authorList>
    </citation>
    <scope>NUCLEOTIDE SEQUENCE [GENOMIC DNA]</scope>
</reference>
<organismHost>
    <name type="scientific">Equus caballus</name>
    <name type="common">Horse</name>
    <dbReference type="NCBI Taxonomy" id="9796"/>
</organismHost>
<proteinExistence type="inferred from homology"/>
<feature type="signal peptide" evidence="2">
    <location>
        <begin position="1"/>
        <end position="22"/>
    </location>
</feature>
<feature type="chain" id="PRO_0000038260" description="Envelope glycoprotein I">
    <location>
        <begin position="23"/>
        <end position="424"/>
    </location>
</feature>
<feature type="topological domain" description="Virion surface" evidence="2">
    <location>
        <begin position="23"/>
        <end position="319"/>
    </location>
</feature>
<feature type="transmembrane region" description="Helical" evidence="2">
    <location>
        <begin position="320"/>
        <end position="340"/>
    </location>
</feature>
<feature type="topological domain" description="Intravirion" evidence="2">
    <location>
        <begin position="341"/>
        <end position="424"/>
    </location>
</feature>
<feature type="region of interest" description="Disordered" evidence="3">
    <location>
        <begin position="192"/>
        <end position="223"/>
    </location>
</feature>
<feature type="region of interest" description="Disordered" evidence="3">
    <location>
        <begin position="287"/>
        <end position="306"/>
    </location>
</feature>
<feature type="region of interest" description="Disordered" evidence="3">
    <location>
        <begin position="377"/>
        <end position="408"/>
    </location>
</feature>
<feature type="compositionally biased region" description="Low complexity" evidence="3">
    <location>
        <begin position="203"/>
        <end position="223"/>
    </location>
</feature>
<feature type="compositionally biased region" description="Polar residues" evidence="3">
    <location>
        <begin position="379"/>
        <end position="388"/>
    </location>
</feature>
<feature type="glycosylation site" description="N-linked (GlcNAc...) asparagine; by host" evidence="2">
    <location>
        <position position="35"/>
    </location>
</feature>
<feature type="glycosylation site" description="N-linked (GlcNAc...) asparagine; by host" evidence="2">
    <location>
        <position position="67"/>
    </location>
</feature>
<feature type="glycosylation site" description="N-linked (GlcNAc...) asparagine; by host" evidence="2">
    <location>
        <position position="78"/>
    </location>
</feature>
<feature type="glycosylation site" description="N-linked (GlcNAc...) asparagine; by host" evidence="2">
    <location>
        <position position="121"/>
    </location>
</feature>
<feature type="glycosylation site" description="N-linked (GlcNAc...) asparagine; by host" evidence="2">
    <location>
        <position position="131"/>
    </location>
</feature>
<feature type="glycosylation site" description="N-linked (GlcNAc...) asparagine; by host" evidence="2">
    <location>
        <position position="236"/>
    </location>
</feature>
<feature type="glycosylation site" description="N-linked (GlcNAc...) asparagine; by host" evidence="2">
    <location>
        <position position="307"/>
    </location>
</feature>
<accession>P68329</accession>
<accession>P18553</accession>
<keyword id="KW-0325">Glycoprotein</keyword>
<keyword id="KW-1031">Host cell junction</keyword>
<keyword id="KW-1032">Host cell membrane</keyword>
<keyword id="KW-1040">Host Golgi apparatus</keyword>
<keyword id="KW-1043">Host membrane</keyword>
<keyword id="KW-0472">Membrane</keyword>
<keyword id="KW-0597">Phosphoprotein</keyword>
<keyword id="KW-0732">Signal</keyword>
<keyword id="KW-0812">Transmembrane</keyword>
<keyword id="KW-1133">Transmembrane helix</keyword>
<keyword id="KW-0261">Viral envelope protein</keyword>
<keyword id="KW-0946">Virion</keyword>
<sequence length="424" mass="46393">MAKLTGMFSAAILLSMAICSTAIIYRGEHMSMYLNASSEFAVYPTDQSLVLVGHLLFLDGQRLPTTNYSGLIELIHYNYSSVCYTVIQTISYESCPRVANNAFRSCLHKTSKHYHDYFRVNASVETNVLLNITKPQPTDSGAYILRVKLDHAPTADVFGVSAFVYDLKSKTVPDPMPTTQTVEPTTSYVSTPTYDYTDDVTTETESTSTSTQQAMTSTQTPSATWGTQLTTELPTNETVVIGQEALLCHWFQPSTRVPTLYLHLLGRTGNLPEDVLLVEDSEFLRTTSPAHRPSASPADGDDFKQTNSTSLKARNKIVAMVVIPTACVLMLLLVVVGAIINGAVRKHLLSCASRRIYRSGQGGASAAERRRLTCGPTLAASSESLADDTTSSPPTPKPSKKTKLETDPLMEQLNRKLEAIKEES</sequence>
<dbReference type="PIR" id="C36646">
    <property type="entry name" value="VGBEE9"/>
</dbReference>
<dbReference type="GlyCosmos" id="P68329">
    <property type="glycosylation" value="7 sites, No reported glycans"/>
</dbReference>
<dbReference type="GO" id="GO:0043657">
    <property type="term" value="C:host cell"/>
    <property type="evidence" value="ECO:0007669"/>
    <property type="project" value="InterPro"/>
</dbReference>
<dbReference type="GO" id="GO:0044178">
    <property type="term" value="C:host cell Golgi membrane"/>
    <property type="evidence" value="ECO:0007669"/>
    <property type="project" value="UniProtKB-SubCell"/>
</dbReference>
<dbReference type="GO" id="GO:0044156">
    <property type="term" value="C:host cell junction"/>
    <property type="evidence" value="ECO:0007669"/>
    <property type="project" value="UniProtKB-SubCell"/>
</dbReference>
<dbReference type="GO" id="GO:0016020">
    <property type="term" value="C:membrane"/>
    <property type="evidence" value="ECO:0007669"/>
    <property type="project" value="UniProtKB-KW"/>
</dbReference>
<dbReference type="GO" id="GO:0019031">
    <property type="term" value="C:viral envelope"/>
    <property type="evidence" value="ECO:0007669"/>
    <property type="project" value="UniProtKB-KW"/>
</dbReference>
<dbReference type="GO" id="GO:0055036">
    <property type="term" value="C:virion membrane"/>
    <property type="evidence" value="ECO:0007669"/>
    <property type="project" value="UniProtKB-SubCell"/>
</dbReference>
<dbReference type="Gene3D" id="2.70.230.10">
    <property type="match status" value="1"/>
</dbReference>
<dbReference type="InterPro" id="IPR002874">
    <property type="entry name" value="Herpes_gI"/>
</dbReference>
<dbReference type="Pfam" id="PF01688">
    <property type="entry name" value="Herpes_gI"/>
    <property type="match status" value="1"/>
</dbReference>
<comment type="function">
    <text>In epithelial cells, the heterodimer gE/gI is required for the cell-to-cell spread of the virus, by sorting nascent virions to cell junctions. Once the virus reaches the cell junctions, virus particles can spread to adjacent cells extremely rapidly through interactions with cellular receptors that accumulate at these junctions. Implicated in basolateral spread in polarized cells. In neuronal cells, gE/gI is essential for the anterograde spread of the infection throughout the host nervous system. Together with US9, the heterodimer gE/gI is involved in the sorting and transport of viral structural components toward axon tips.</text>
</comment>
<comment type="subunit">
    <text evidence="1">Interacts with gE.</text>
</comment>
<comment type="subcellular location">
    <subcellularLocation>
        <location evidence="1">Virion membrane</location>
        <topology evidence="1">Single-pass membrane protein</topology>
    </subcellularLocation>
    <subcellularLocation>
        <location evidence="4">Host cell membrane</location>
        <topology evidence="4">Single-pass type I membrane protein</topology>
    </subcellularLocation>
    <subcellularLocation>
        <location evidence="1">Host cell junction</location>
    </subcellularLocation>
    <subcellularLocation>
        <location evidence="1">Host Golgi apparatus membrane</location>
        <topology evidence="1">Single-pass type I membrane protein</topology>
    </subcellularLocation>
    <text evidence="1">During virion morphogenesis, this protein probably accumulates in the endosomes and trans-Golgi where secondary envelopment occurs. It is probably transported to the cell surface from where it is endocytosed and directed to the trans-Golgi network (TGN). The heterodimer gE/gI then redistribute to cell junctions to promote cell-cell spread later in the infection (By similarity).</text>
</comment>
<comment type="similarity">
    <text evidence="4">Belongs to the alphaherpesvirinae glycoprotein I family.</text>
</comment>
<name>GI_EHV1D</name>
<protein>
    <recommendedName>
        <fullName>Envelope glycoprotein I</fullName>
        <shortName>gI</shortName>
    </recommendedName>
</protein>
<gene>
    <name type="primary">gI</name>
</gene>
<evidence type="ECO:0000250" key="1"/>
<evidence type="ECO:0000255" key="2"/>
<evidence type="ECO:0000256" key="3">
    <source>
        <dbReference type="SAM" id="MobiDB-lite"/>
    </source>
</evidence>
<evidence type="ECO:0000305" key="4"/>